<gene>
    <name evidence="1" type="primary">rutC</name>
    <name type="ordered locus">SDY_0985</name>
</gene>
<evidence type="ECO:0000255" key="1">
    <source>
        <dbReference type="HAMAP-Rule" id="MF_00831"/>
    </source>
</evidence>
<reference key="1">
    <citation type="journal article" date="2005" name="Nucleic Acids Res.">
        <title>Genome dynamics and diversity of Shigella species, the etiologic agents of bacillary dysentery.</title>
        <authorList>
            <person name="Yang F."/>
            <person name="Yang J."/>
            <person name="Zhang X."/>
            <person name="Chen L."/>
            <person name="Jiang Y."/>
            <person name="Yan Y."/>
            <person name="Tang X."/>
            <person name="Wang J."/>
            <person name="Xiong Z."/>
            <person name="Dong J."/>
            <person name="Xue Y."/>
            <person name="Zhu Y."/>
            <person name="Xu X."/>
            <person name="Sun L."/>
            <person name="Chen S."/>
            <person name="Nie H."/>
            <person name="Peng J."/>
            <person name="Xu J."/>
            <person name="Wang Y."/>
            <person name="Yuan Z."/>
            <person name="Wen Y."/>
            <person name="Yao Z."/>
            <person name="Shen Y."/>
            <person name="Qiang B."/>
            <person name="Hou Y."/>
            <person name="Yu J."/>
            <person name="Jin Q."/>
        </authorList>
    </citation>
    <scope>NUCLEOTIDE SEQUENCE [LARGE SCALE GENOMIC DNA]</scope>
    <source>
        <strain>Sd197</strain>
    </source>
</reference>
<comment type="function">
    <text evidence="1">Involved in pyrimidine catabolism. Catalyzes the deamination of 3-aminoacrylate to malonic semialdehyde, a reaction that can also occur spontaneously. RutC may facilitate the reaction and modulate the metabolic fitness, rather than catalyzing essential functions.</text>
</comment>
<comment type="catalytic activity">
    <reaction evidence="1">
        <text>(Z)-3-aminoacrylate + H2O + H(+) = 3-oxopropanoate + NH4(+)</text>
        <dbReference type="Rhea" id="RHEA:34947"/>
        <dbReference type="ChEBI" id="CHEBI:15377"/>
        <dbReference type="ChEBI" id="CHEBI:15378"/>
        <dbReference type="ChEBI" id="CHEBI:28938"/>
        <dbReference type="ChEBI" id="CHEBI:33190"/>
        <dbReference type="ChEBI" id="CHEBI:59894"/>
    </reaction>
</comment>
<comment type="subunit">
    <text evidence="1">Homotrimer.</text>
</comment>
<comment type="similarity">
    <text evidence="1">Belongs to the RutC family.</text>
</comment>
<dbReference type="EC" id="3.5.-.-" evidence="1"/>
<dbReference type="EMBL" id="CP000034">
    <property type="protein sequence ID" value="ABB61154.1"/>
    <property type="molecule type" value="Genomic_DNA"/>
</dbReference>
<dbReference type="RefSeq" id="WP_001126780.1">
    <property type="nucleotide sequence ID" value="NC_007606.1"/>
</dbReference>
<dbReference type="RefSeq" id="YP_402645.1">
    <property type="nucleotide sequence ID" value="NC_007606.1"/>
</dbReference>
<dbReference type="SMR" id="Q32HQ1"/>
<dbReference type="STRING" id="300267.SDY_0985"/>
<dbReference type="EnsemblBacteria" id="ABB61154">
    <property type="protein sequence ID" value="ABB61154"/>
    <property type="gene ID" value="SDY_0985"/>
</dbReference>
<dbReference type="GeneID" id="75171086"/>
<dbReference type="KEGG" id="sdy:SDY_0985"/>
<dbReference type="PATRIC" id="fig|300267.13.peg.1145"/>
<dbReference type="HOGENOM" id="CLU_100715_7_3_6"/>
<dbReference type="Proteomes" id="UP000002716">
    <property type="component" value="Chromosome"/>
</dbReference>
<dbReference type="GO" id="GO:0005829">
    <property type="term" value="C:cytosol"/>
    <property type="evidence" value="ECO:0007669"/>
    <property type="project" value="TreeGrafter"/>
</dbReference>
<dbReference type="GO" id="GO:0019239">
    <property type="term" value="F:deaminase activity"/>
    <property type="evidence" value="ECO:0007669"/>
    <property type="project" value="TreeGrafter"/>
</dbReference>
<dbReference type="GO" id="GO:0019740">
    <property type="term" value="P:nitrogen utilization"/>
    <property type="evidence" value="ECO:0007669"/>
    <property type="project" value="UniProtKB-UniRule"/>
</dbReference>
<dbReference type="GO" id="GO:0006212">
    <property type="term" value="P:uracil catabolic process"/>
    <property type="evidence" value="ECO:0007669"/>
    <property type="project" value="UniProtKB-UniRule"/>
</dbReference>
<dbReference type="CDD" id="cd00448">
    <property type="entry name" value="YjgF_YER057c_UK114_family"/>
    <property type="match status" value="1"/>
</dbReference>
<dbReference type="FunFam" id="3.30.1330.40:FF:000003">
    <property type="entry name" value="Putative aminoacrylate peracid reductase RutC"/>
    <property type="match status" value="1"/>
</dbReference>
<dbReference type="Gene3D" id="3.30.1330.40">
    <property type="entry name" value="RutC-like"/>
    <property type="match status" value="1"/>
</dbReference>
<dbReference type="HAMAP" id="MF_00831">
    <property type="entry name" value="RutC"/>
    <property type="match status" value="1"/>
</dbReference>
<dbReference type="InterPro" id="IPR019897">
    <property type="entry name" value="RidA_CS"/>
</dbReference>
<dbReference type="InterPro" id="IPR019898">
    <property type="entry name" value="RutC"/>
</dbReference>
<dbReference type="InterPro" id="IPR035959">
    <property type="entry name" value="RutC-like_sf"/>
</dbReference>
<dbReference type="InterPro" id="IPR006175">
    <property type="entry name" value="YjgF/YER057c/UK114"/>
</dbReference>
<dbReference type="NCBIfam" id="TIGR03610">
    <property type="entry name" value="RutC"/>
    <property type="match status" value="1"/>
</dbReference>
<dbReference type="PANTHER" id="PTHR11803">
    <property type="entry name" value="2-IMINOBUTANOATE/2-IMINOPROPANOATE DEAMINASE RIDA"/>
    <property type="match status" value="1"/>
</dbReference>
<dbReference type="PANTHER" id="PTHR11803:SF58">
    <property type="entry name" value="PROTEIN HMF1-RELATED"/>
    <property type="match status" value="1"/>
</dbReference>
<dbReference type="Pfam" id="PF01042">
    <property type="entry name" value="Ribonuc_L-PSP"/>
    <property type="match status" value="1"/>
</dbReference>
<dbReference type="SUPFAM" id="SSF55298">
    <property type="entry name" value="YjgF-like"/>
    <property type="match status" value="1"/>
</dbReference>
<dbReference type="PROSITE" id="PS01094">
    <property type="entry name" value="UPF0076"/>
    <property type="match status" value="1"/>
</dbReference>
<accession>Q32HQ1</accession>
<protein>
    <recommendedName>
        <fullName evidence="1">3-aminoacrylate deaminase RutC</fullName>
        <shortName evidence="1">3-AA deaminase</shortName>
        <ecNumber evidence="1">3.5.-.-</ecNumber>
    </recommendedName>
</protein>
<organism>
    <name type="scientific">Shigella dysenteriae serotype 1 (strain Sd197)</name>
    <dbReference type="NCBI Taxonomy" id="300267"/>
    <lineage>
        <taxon>Bacteria</taxon>
        <taxon>Pseudomonadati</taxon>
        <taxon>Pseudomonadota</taxon>
        <taxon>Gammaproteobacteria</taxon>
        <taxon>Enterobacterales</taxon>
        <taxon>Enterobacteriaceae</taxon>
        <taxon>Shigella</taxon>
    </lineage>
</organism>
<keyword id="KW-0378">Hydrolase</keyword>
<keyword id="KW-1185">Reference proteome</keyword>
<name>RUTC_SHIDS</name>
<proteinExistence type="inferred from homology"/>
<sequence length="128" mass="13763">MPKSVIIPAGSSAPLAPFVPGTLADGVVYVSGTLAFDQHNNVLFADDPKAQTRHVLETIRKVIETAGGTMADVTFNSIFITDWKNYAAINEIYAEFFPGDKPARFCIQCGLVKPDALVEIATIAHIAK</sequence>
<feature type="chain" id="PRO_0000402765" description="3-aminoacrylate deaminase RutC">
    <location>
        <begin position="1"/>
        <end position="128"/>
    </location>
</feature>